<gene>
    <name evidence="9" type="primary">Otud5</name>
    <name type="synonym">DXImx46e</name>
    <name type="synonym">Sfc7</name>
</gene>
<keyword id="KW-0025">Alternative splicing</keyword>
<keyword id="KW-0378">Hydrolase</keyword>
<keyword id="KW-0539">Nucleus</keyword>
<keyword id="KW-0597">Phosphoprotein</keyword>
<keyword id="KW-0645">Protease</keyword>
<keyword id="KW-1185">Reference proteome</keyword>
<keyword id="KW-0788">Thiol protease</keyword>
<keyword id="KW-0833">Ubl conjugation pathway</keyword>
<feature type="chain" id="PRO_0000278224" description="OTU domain-containing protein 5">
    <location>
        <begin position="1"/>
        <end position="566"/>
    </location>
</feature>
<feature type="domain" description="OTU" evidence="4">
    <location>
        <begin position="213"/>
        <end position="336"/>
    </location>
</feature>
<feature type="region of interest" description="Disordered" evidence="5">
    <location>
        <begin position="1"/>
        <end position="117"/>
    </location>
</feature>
<feature type="region of interest" description="Disordered" evidence="5">
    <location>
        <begin position="145"/>
        <end position="175"/>
    </location>
</feature>
<feature type="region of interest" description="Cys-loop" evidence="1">
    <location>
        <begin position="218"/>
        <end position="224"/>
    </location>
</feature>
<feature type="region of interest" description="Variable-loop" evidence="1">
    <location>
        <begin position="273"/>
        <end position="283"/>
    </location>
</feature>
<feature type="region of interest" description="His-loop" evidence="1">
    <location>
        <begin position="324"/>
        <end position="329"/>
    </location>
</feature>
<feature type="region of interest" description="Disordered" evidence="5">
    <location>
        <begin position="413"/>
        <end position="499"/>
    </location>
</feature>
<feature type="compositionally biased region" description="Pro residues" evidence="5">
    <location>
        <begin position="11"/>
        <end position="30"/>
    </location>
</feature>
<feature type="compositionally biased region" description="Gly residues" evidence="5">
    <location>
        <begin position="34"/>
        <end position="47"/>
    </location>
</feature>
<feature type="compositionally biased region" description="Pro residues" evidence="5">
    <location>
        <begin position="63"/>
        <end position="75"/>
    </location>
</feature>
<feature type="compositionally biased region" description="Low complexity" evidence="5">
    <location>
        <begin position="84"/>
        <end position="97"/>
    </location>
</feature>
<feature type="compositionally biased region" description="Gly residues" evidence="5">
    <location>
        <begin position="105"/>
        <end position="115"/>
    </location>
</feature>
<feature type="compositionally biased region" description="Low complexity" evidence="5">
    <location>
        <begin position="425"/>
        <end position="438"/>
    </location>
</feature>
<feature type="compositionally biased region" description="Low complexity" evidence="5">
    <location>
        <begin position="445"/>
        <end position="457"/>
    </location>
</feature>
<feature type="active site" evidence="3">
    <location>
        <position position="221"/>
    </location>
</feature>
<feature type="active site" description="Nucleophile" evidence="2">
    <location>
        <position position="224"/>
    </location>
</feature>
<feature type="active site" evidence="2">
    <location>
        <position position="329"/>
    </location>
</feature>
<feature type="modified residue" description="Phosphoserine" evidence="2">
    <location>
        <position position="64"/>
    </location>
</feature>
<feature type="modified residue" description="Phosphoserine" evidence="10">
    <location>
        <position position="165"/>
    </location>
</feature>
<feature type="modified residue" description="Phosphotyrosine" evidence="10">
    <location>
        <position position="175"/>
    </location>
</feature>
<feature type="modified residue" description="Phosphoserine" evidence="10">
    <location>
        <position position="177"/>
    </location>
</feature>
<feature type="modified residue" description="Phosphothreonine" evidence="2">
    <location>
        <position position="195"/>
    </location>
</feature>
<feature type="modified residue" description="Phosphoserine" evidence="2">
    <location>
        <position position="323"/>
    </location>
</feature>
<feature type="modified residue" description="Phosphoserine" evidence="2">
    <location>
        <position position="332"/>
    </location>
</feature>
<feature type="modified residue" description="Phosphoserine" evidence="2">
    <location>
        <position position="370"/>
    </location>
</feature>
<feature type="modified residue" description="Phosphoserine" evidence="2">
    <location>
        <position position="447"/>
    </location>
</feature>
<feature type="modified residue" description="Phosphothreonine" evidence="2">
    <location>
        <position position="502"/>
    </location>
</feature>
<feature type="modified residue" description="Phosphoserine" evidence="2">
    <location>
        <position position="503"/>
    </location>
</feature>
<feature type="splice variant" id="VSP_023196" description="In isoform 2." evidence="7">
    <location>
        <begin position="118"/>
        <end position="160"/>
    </location>
</feature>
<feature type="sequence conflict" description="In Ref. 3; AAF66952." evidence="8" ref="3">
    <location>
        <position position="199"/>
    </location>
</feature>
<feature type="sequence conflict" description="In Ref. 3; AAF66952." evidence="8" ref="3">
    <original>I</original>
    <variation>F</variation>
    <location>
        <position position="306"/>
    </location>
</feature>
<feature type="sequence conflict" description="In Ref. 1; BAE33066." evidence="8" ref="1">
    <original>T</original>
    <variation>I</variation>
    <location>
        <position position="308"/>
    </location>
</feature>
<feature type="sequence conflict" description="In Ref. 3; AAF66952." evidence="8" ref="3">
    <original>A</original>
    <variation>V</variation>
    <location>
        <position position="436"/>
    </location>
</feature>
<feature type="sequence conflict" description="In Ref. 1; BAE33066." evidence="8" ref="1">
    <original>F</original>
    <variation>FA</variation>
    <location>
        <position position="526"/>
    </location>
</feature>
<feature type="sequence conflict" description="In Ref. 1; BAE29078." evidence="8" ref="1">
    <original>D</original>
    <variation>Y</variation>
    <location>
        <position position="532"/>
    </location>
</feature>
<accession>Q3U2S4</accession>
<accession>Q3UE33</accession>
<accession>Q91YL5</accession>
<accession>Q9CV50</accession>
<accession>Q9JIG6</accession>
<comment type="function">
    <text evidence="2">Deubiquitinating enzyme that functions as a negative regulator of the innate immune system. Has peptidase activity towards 'Lys-48'- and 'Lys-63'-linked polyubiquitin chains. Can also cleave 'Lys-11'-linked ubiquitin chains (in vitro). Acts via TRAF3 deubiquitination and subsequent suppression of type I interferon (IFN) production. Controls neuroectodermal differentiation through cleaving 'Lys-48'-linked ubiquitin chains to counteract degradation of select chromatin regulators such as ARID1A, HDAC2 and HCF1. Acts as a positive regulator of mTORC1 and mTORC2 signaling following phosphorylation by MTOR: acts by mediating deubiquitination of BTRC, leading to its stability.</text>
</comment>
<comment type="catalytic activity">
    <reaction evidence="2">
        <text>Thiol-dependent hydrolysis of ester, thioester, amide, peptide and isopeptide bonds formed by the C-terminal Gly of ubiquitin (a 76-residue protein attached to proteins as an intracellular targeting signal).</text>
        <dbReference type="EC" id="3.4.19.12"/>
    </reaction>
</comment>
<comment type="activity regulation">
    <text evidence="2">Inhibited by N-ethyl-maleimide (NEM).</text>
</comment>
<comment type="subunit">
    <text evidence="2">Interacts with TRAF3.</text>
</comment>
<comment type="interaction">
    <interactant intactId="EBI-16131219">
        <id>Q3U2S4-1</id>
    </interactant>
    <interactant intactId="EBI-2553642">
        <id>Q80TP3</id>
        <label>Ubr5</label>
    </interactant>
    <organismsDiffer>false</organismsDiffer>
    <experiments>2</experiments>
</comment>
<comment type="subcellular location">
    <subcellularLocation>
        <location evidence="2">Nucleus</location>
    </subcellularLocation>
</comment>
<comment type="alternative products">
    <event type="alternative splicing"/>
    <isoform>
        <id>Q3U2S4-1</id>
        <name>1</name>
        <sequence type="displayed"/>
    </isoform>
    <isoform>
        <id>Q3U2S4-2</id>
        <name>2</name>
        <sequence type="described" ref="VSP_023196"/>
    </isoform>
</comment>
<comment type="PTM">
    <text evidence="2">Phosphorylation at Ser-177 is required for deubiquitinating activity. Phosphorylation at Ser-323, Ser-332 and Ser-503 by MTOR promotes its activity.</text>
</comment>
<comment type="disruption phenotype">
    <text evidence="6">Mutant mice die at the embryo stage.</text>
</comment>
<comment type="similarity">
    <text evidence="8">Belongs to the peptidase C85 family.</text>
</comment>
<name>OTUD5_MOUSE</name>
<organism>
    <name type="scientific">Mus musculus</name>
    <name type="common">Mouse</name>
    <dbReference type="NCBI Taxonomy" id="10090"/>
    <lineage>
        <taxon>Eukaryota</taxon>
        <taxon>Metazoa</taxon>
        <taxon>Chordata</taxon>
        <taxon>Craniata</taxon>
        <taxon>Vertebrata</taxon>
        <taxon>Euteleostomi</taxon>
        <taxon>Mammalia</taxon>
        <taxon>Eutheria</taxon>
        <taxon>Euarchontoglires</taxon>
        <taxon>Glires</taxon>
        <taxon>Rodentia</taxon>
        <taxon>Myomorpha</taxon>
        <taxon>Muroidea</taxon>
        <taxon>Muridae</taxon>
        <taxon>Murinae</taxon>
        <taxon>Mus</taxon>
        <taxon>Mus</taxon>
    </lineage>
</organism>
<proteinExistence type="evidence at protein level"/>
<reference key="1">
    <citation type="journal article" date="2005" name="Science">
        <title>The transcriptional landscape of the mammalian genome.</title>
        <authorList>
            <person name="Carninci P."/>
            <person name="Kasukawa T."/>
            <person name="Katayama S."/>
            <person name="Gough J."/>
            <person name="Frith M.C."/>
            <person name="Maeda N."/>
            <person name="Oyama R."/>
            <person name="Ravasi T."/>
            <person name="Lenhard B."/>
            <person name="Wells C."/>
            <person name="Kodzius R."/>
            <person name="Shimokawa K."/>
            <person name="Bajic V.B."/>
            <person name="Brenner S.E."/>
            <person name="Batalov S."/>
            <person name="Forrest A.R."/>
            <person name="Zavolan M."/>
            <person name="Davis M.J."/>
            <person name="Wilming L.G."/>
            <person name="Aidinis V."/>
            <person name="Allen J.E."/>
            <person name="Ambesi-Impiombato A."/>
            <person name="Apweiler R."/>
            <person name="Aturaliya R.N."/>
            <person name="Bailey T.L."/>
            <person name="Bansal M."/>
            <person name="Baxter L."/>
            <person name="Beisel K.W."/>
            <person name="Bersano T."/>
            <person name="Bono H."/>
            <person name="Chalk A.M."/>
            <person name="Chiu K.P."/>
            <person name="Choudhary V."/>
            <person name="Christoffels A."/>
            <person name="Clutterbuck D.R."/>
            <person name="Crowe M.L."/>
            <person name="Dalla E."/>
            <person name="Dalrymple B.P."/>
            <person name="de Bono B."/>
            <person name="Della Gatta G."/>
            <person name="di Bernardo D."/>
            <person name="Down T."/>
            <person name="Engstrom P."/>
            <person name="Fagiolini M."/>
            <person name="Faulkner G."/>
            <person name="Fletcher C.F."/>
            <person name="Fukushima T."/>
            <person name="Furuno M."/>
            <person name="Futaki S."/>
            <person name="Gariboldi M."/>
            <person name="Georgii-Hemming P."/>
            <person name="Gingeras T.R."/>
            <person name="Gojobori T."/>
            <person name="Green R.E."/>
            <person name="Gustincich S."/>
            <person name="Harbers M."/>
            <person name="Hayashi Y."/>
            <person name="Hensch T.K."/>
            <person name="Hirokawa N."/>
            <person name="Hill D."/>
            <person name="Huminiecki L."/>
            <person name="Iacono M."/>
            <person name="Ikeo K."/>
            <person name="Iwama A."/>
            <person name="Ishikawa T."/>
            <person name="Jakt M."/>
            <person name="Kanapin A."/>
            <person name="Katoh M."/>
            <person name="Kawasawa Y."/>
            <person name="Kelso J."/>
            <person name="Kitamura H."/>
            <person name="Kitano H."/>
            <person name="Kollias G."/>
            <person name="Krishnan S.P."/>
            <person name="Kruger A."/>
            <person name="Kummerfeld S.K."/>
            <person name="Kurochkin I.V."/>
            <person name="Lareau L.F."/>
            <person name="Lazarevic D."/>
            <person name="Lipovich L."/>
            <person name="Liu J."/>
            <person name="Liuni S."/>
            <person name="McWilliam S."/>
            <person name="Madan Babu M."/>
            <person name="Madera M."/>
            <person name="Marchionni L."/>
            <person name="Matsuda H."/>
            <person name="Matsuzawa S."/>
            <person name="Miki H."/>
            <person name="Mignone F."/>
            <person name="Miyake S."/>
            <person name="Morris K."/>
            <person name="Mottagui-Tabar S."/>
            <person name="Mulder N."/>
            <person name="Nakano N."/>
            <person name="Nakauchi H."/>
            <person name="Ng P."/>
            <person name="Nilsson R."/>
            <person name="Nishiguchi S."/>
            <person name="Nishikawa S."/>
            <person name="Nori F."/>
            <person name="Ohara O."/>
            <person name="Okazaki Y."/>
            <person name="Orlando V."/>
            <person name="Pang K.C."/>
            <person name="Pavan W.J."/>
            <person name="Pavesi G."/>
            <person name="Pesole G."/>
            <person name="Petrovsky N."/>
            <person name="Piazza S."/>
            <person name="Reed J."/>
            <person name="Reid J.F."/>
            <person name="Ring B.Z."/>
            <person name="Ringwald M."/>
            <person name="Rost B."/>
            <person name="Ruan Y."/>
            <person name="Salzberg S.L."/>
            <person name="Sandelin A."/>
            <person name="Schneider C."/>
            <person name="Schoenbach C."/>
            <person name="Sekiguchi K."/>
            <person name="Semple C.A."/>
            <person name="Seno S."/>
            <person name="Sessa L."/>
            <person name="Sheng Y."/>
            <person name="Shibata Y."/>
            <person name="Shimada H."/>
            <person name="Shimada K."/>
            <person name="Silva D."/>
            <person name="Sinclair B."/>
            <person name="Sperling S."/>
            <person name="Stupka E."/>
            <person name="Sugiura K."/>
            <person name="Sultana R."/>
            <person name="Takenaka Y."/>
            <person name="Taki K."/>
            <person name="Tammoja K."/>
            <person name="Tan S.L."/>
            <person name="Tang S."/>
            <person name="Taylor M.S."/>
            <person name="Tegner J."/>
            <person name="Teichmann S.A."/>
            <person name="Ueda H.R."/>
            <person name="van Nimwegen E."/>
            <person name="Verardo R."/>
            <person name="Wei C.L."/>
            <person name="Yagi K."/>
            <person name="Yamanishi H."/>
            <person name="Zabarovsky E."/>
            <person name="Zhu S."/>
            <person name="Zimmer A."/>
            <person name="Hide W."/>
            <person name="Bult C."/>
            <person name="Grimmond S.M."/>
            <person name="Teasdale R.D."/>
            <person name="Liu E.T."/>
            <person name="Brusic V."/>
            <person name="Quackenbush J."/>
            <person name="Wahlestedt C."/>
            <person name="Mattick J.S."/>
            <person name="Hume D.A."/>
            <person name="Kai C."/>
            <person name="Sasaki D."/>
            <person name="Tomaru Y."/>
            <person name="Fukuda S."/>
            <person name="Kanamori-Katayama M."/>
            <person name="Suzuki M."/>
            <person name="Aoki J."/>
            <person name="Arakawa T."/>
            <person name="Iida J."/>
            <person name="Imamura K."/>
            <person name="Itoh M."/>
            <person name="Kato T."/>
            <person name="Kawaji H."/>
            <person name="Kawagashira N."/>
            <person name="Kawashima T."/>
            <person name="Kojima M."/>
            <person name="Kondo S."/>
            <person name="Konno H."/>
            <person name="Nakano K."/>
            <person name="Ninomiya N."/>
            <person name="Nishio T."/>
            <person name="Okada M."/>
            <person name="Plessy C."/>
            <person name="Shibata K."/>
            <person name="Shiraki T."/>
            <person name="Suzuki S."/>
            <person name="Tagami M."/>
            <person name="Waki K."/>
            <person name="Watahiki A."/>
            <person name="Okamura-Oho Y."/>
            <person name="Suzuki H."/>
            <person name="Kawai J."/>
            <person name="Hayashizaki Y."/>
        </authorList>
    </citation>
    <scope>NUCLEOTIDE SEQUENCE [LARGE SCALE MRNA] (ISOFORMS 1 AND 2)</scope>
    <source>
        <strain>C57BL/6J</strain>
        <strain>NOD</strain>
        <tissue>Bone marrow</tissue>
        <tissue>Spleen</tissue>
        <tissue>Tongue</tissue>
    </source>
</reference>
<reference key="2">
    <citation type="journal article" date="2009" name="PLoS Biol.">
        <title>Lineage-specific biology revealed by a finished genome assembly of the mouse.</title>
        <authorList>
            <person name="Church D.M."/>
            <person name="Goodstadt L."/>
            <person name="Hillier L.W."/>
            <person name="Zody M.C."/>
            <person name="Goldstein S."/>
            <person name="She X."/>
            <person name="Bult C.J."/>
            <person name="Agarwala R."/>
            <person name="Cherry J.L."/>
            <person name="DiCuccio M."/>
            <person name="Hlavina W."/>
            <person name="Kapustin Y."/>
            <person name="Meric P."/>
            <person name="Maglott D."/>
            <person name="Birtle Z."/>
            <person name="Marques A.C."/>
            <person name="Graves T."/>
            <person name="Zhou S."/>
            <person name="Teague B."/>
            <person name="Potamousis K."/>
            <person name="Churas C."/>
            <person name="Place M."/>
            <person name="Herschleb J."/>
            <person name="Runnheim R."/>
            <person name="Forrest D."/>
            <person name="Amos-Landgraf J."/>
            <person name="Schwartz D.C."/>
            <person name="Cheng Z."/>
            <person name="Lindblad-Toh K."/>
            <person name="Eichler E.E."/>
            <person name="Ponting C.P."/>
        </authorList>
    </citation>
    <scope>NUCLEOTIDE SEQUENCE [LARGE SCALE GENOMIC DNA]</scope>
    <source>
        <strain>C57BL/6J</strain>
    </source>
</reference>
<reference key="3">
    <citation type="journal article" date="2004" name="Genome Res.">
        <title>The status, quality, and expansion of the NIH full-length cDNA project: the Mammalian Gene Collection (MGC).</title>
        <authorList>
            <consortium name="The MGC Project Team"/>
        </authorList>
    </citation>
    <scope>NUCLEOTIDE SEQUENCE [LARGE SCALE MRNA] (ISOFORM 1)</scope>
    <source>
        <strain>FVB/N</strain>
        <tissue>Mammary gland</tissue>
    </source>
</reference>
<reference key="4">
    <citation type="journal article" date="2000" name="Genomics">
        <title>A transcript map of a 2-Mb BAC contig in the proximal portion of the mouse X chromosome and regional mapping of the scurfy mutation.</title>
        <authorList>
            <person name="Means G.D."/>
            <person name="Toy D.Y."/>
            <person name="Baum P.R."/>
            <person name="Derry J.M.J."/>
        </authorList>
    </citation>
    <scope>NUCLEOTIDE SEQUENCE [MRNA] OF 191-566 (ISOFORMS 1/2)</scope>
</reference>
<reference key="5">
    <citation type="journal article" date="2010" name="Cell">
        <title>A tissue-specific atlas of mouse protein phosphorylation and expression.</title>
        <authorList>
            <person name="Huttlin E.L."/>
            <person name="Jedrychowski M.P."/>
            <person name="Elias J.E."/>
            <person name="Goswami T."/>
            <person name="Rad R."/>
            <person name="Beausoleil S.A."/>
            <person name="Villen J."/>
            <person name="Haas W."/>
            <person name="Sowa M.E."/>
            <person name="Gygi S.P."/>
        </authorList>
    </citation>
    <scope>PHOSPHORYLATION [LARGE SCALE ANALYSIS] AT SER-165; TYR-175 AND SER-177</scope>
    <scope>IDENTIFICATION BY MASS SPECTROMETRY [LARGE SCALE ANALYSIS]</scope>
    <source>
        <tissue>Brain</tissue>
        <tissue>Heart</tissue>
        <tissue>Kidney</tissue>
        <tissue>Lung</tissue>
        <tissue>Pancreas</tissue>
        <tissue>Spleen</tissue>
        <tissue>Testis</tissue>
    </source>
</reference>
<reference key="6">
    <citation type="journal article" date="2021" name="Sci. Adv.">
        <title>Linkage-specific deubiquitylation by OTUD5 defines an embryonic pathway intolerant to genomic variation.</title>
        <authorList>
            <consortium name="Undiagnosed Diseases Network"/>
            <person name="Beck D.B."/>
            <person name="Basar M.A."/>
            <person name="Asmar A.J."/>
            <person name="Thompson J.J."/>
            <person name="Oda H."/>
            <person name="Uehara D.T."/>
            <person name="Saida K."/>
            <person name="Pajusalu S."/>
            <person name="Talvik I."/>
            <person name="D'Souza P."/>
            <person name="Bodurtha J."/>
            <person name="Mu W."/>
            <person name="Baranano K.W."/>
            <person name="Miyake N."/>
            <person name="Wang R."/>
            <person name="Kempers M."/>
            <person name="Tamada T."/>
            <person name="Nishimura Y."/>
            <person name="Okada S."/>
            <person name="Kosho T."/>
            <person name="Dale R."/>
            <person name="Mitra A."/>
            <person name="Macnamara E."/>
            <person name="Matsumoto N."/>
            <person name="Inazawa J."/>
            <person name="Walkiewicz M."/>
            <person name="Ounap K."/>
            <person name="Tifft C.J."/>
            <person name="Aksentijevich I."/>
            <person name="Kastner D.L."/>
            <person name="Rocha P.P."/>
            <person name="Werner A."/>
        </authorList>
    </citation>
    <scope>DISRUPTION PHENOTYPE</scope>
</reference>
<evidence type="ECO:0000250" key="1"/>
<evidence type="ECO:0000250" key="2">
    <source>
        <dbReference type="UniProtKB" id="Q96G74"/>
    </source>
</evidence>
<evidence type="ECO:0000255" key="3"/>
<evidence type="ECO:0000255" key="4">
    <source>
        <dbReference type="PROSITE-ProRule" id="PRU00139"/>
    </source>
</evidence>
<evidence type="ECO:0000256" key="5">
    <source>
        <dbReference type="SAM" id="MobiDB-lite"/>
    </source>
</evidence>
<evidence type="ECO:0000269" key="6">
    <source>
    </source>
</evidence>
<evidence type="ECO:0000303" key="7">
    <source>
    </source>
</evidence>
<evidence type="ECO:0000305" key="8"/>
<evidence type="ECO:0000312" key="9">
    <source>
        <dbReference type="MGI" id="MGI:1859615"/>
    </source>
</evidence>
<evidence type="ECO:0007744" key="10">
    <source>
    </source>
</evidence>
<sequence>MTILPKKKPPPPDADPANEPPPPGPLPPAPRRGAGVGVGGGGTGVGGGERDRDSGVVGARPRASPPPQGPLPGPPGALHRWALAVPPGAVAGPRPQQASPPPCGGPGGPGGGPGDALGATTAGVGAAGVVVGVGGTVGVGGCCSGPGHSKRRRQAPGVGAVGGASPEREEVGAGYNSEDEYEAAAARIEAMDPATVEQQEHWFEKALRDKKGFIIKQMKEDGACLFRAVADQVYGDQDMHEVVRKHCMDYLMKNADYFSNYVTEDFTTYINRKRKNNCHGNHIEMQAMAEMYNRPVEVYQYSTEPINTFHGIHQNEDEPIRVSYHRNIHYNSVVNPNKATIGVGLGLPSFKPGFAEQSLMKNAIKTSEESWIEQQMLEDKKRATDWEATNEAIEEQVARESYLQWLRDQEKQARQVRGPSQPRKASATCSSATAAASSGLEEWTSRSPRQRSSASSPEHPELHAELGIKPPSPGTVLALAKPPSPCAPGTSSQFSAGGDRATSPLVSLYPALECRALIQQMSPSAFGLNDWDDDEILASVLAVSQQEYLDSMKKNKVHREPPPDKS</sequence>
<protein>
    <recommendedName>
        <fullName>OTU domain-containing protein 5</fullName>
        <ecNumber evidence="2">3.4.19.12</ecNumber>
    </recommendedName>
    <alternativeName>
        <fullName>Deubiquitinating enzyme A</fullName>
        <shortName>DUBA</shortName>
    </alternativeName>
</protein>
<dbReference type="EC" id="3.4.19.12" evidence="2"/>
<dbReference type="EMBL" id="AK009620">
    <property type="protein sequence ID" value="BAB26396.1"/>
    <property type="molecule type" value="mRNA"/>
</dbReference>
<dbReference type="EMBL" id="AK149777">
    <property type="protein sequence ID" value="BAE29078.1"/>
    <property type="molecule type" value="mRNA"/>
</dbReference>
<dbReference type="EMBL" id="AK155131">
    <property type="protein sequence ID" value="BAE33066.1"/>
    <property type="molecule type" value="mRNA"/>
</dbReference>
<dbReference type="EMBL" id="AK171874">
    <property type="protein sequence ID" value="BAE42712.1"/>
    <property type="molecule type" value="mRNA"/>
</dbReference>
<dbReference type="EMBL" id="BC016529">
    <property type="protein sequence ID" value="AAH16529.1"/>
    <property type="molecule type" value="mRNA"/>
</dbReference>
<dbReference type="EMBL" id="BC051111">
    <property type="protein sequence ID" value="AAH51111.1"/>
    <property type="molecule type" value="mRNA"/>
</dbReference>
<dbReference type="EMBL" id="AF229642">
    <property type="protein sequence ID" value="AAF66952.1"/>
    <property type="molecule type" value="mRNA"/>
</dbReference>
<dbReference type="EMBL" id="AL671978">
    <property type="status" value="NOT_ANNOTATED_CDS"/>
    <property type="molecule type" value="Genomic_DNA"/>
</dbReference>
<dbReference type="EMBL" id="AL671995">
    <property type="status" value="NOT_ANNOTATED_CDS"/>
    <property type="molecule type" value="Genomic_DNA"/>
</dbReference>
<dbReference type="CCDS" id="CCDS29975.1">
    <molecule id="Q3U2S4-1"/>
</dbReference>
<dbReference type="CCDS" id="CCDS72335.1">
    <molecule id="Q3U2S4-2"/>
</dbReference>
<dbReference type="RefSeq" id="NP_001277466.1">
    <molecule id="Q3U2S4-2"/>
    <property type="nucleotide sequence ID" value="NM_001290537.2"/>
</dbReference>
<dbReference type="RefSeq" id="NP_001413227.1">
    <molecule id="Q3U2S4-1"/>
    <property type="nucleotide sequence ID" value="NM_001426298.1"/>
</dbReference>
<dbReference type="RefSeq" id="NP_613070.2">
    <molecule id="Q3U2S4-1"/>
    <property type="nucleotide sequence ID" value="NM_138604.3"/>
</dbReference>
<dbReference type="SMR" id="Q3U2S4"/>
<dbReference type="BioGRID" id="207706">
    <property type="interactions" value="11"/>
</dbReference>
<dbReference type="DIP" id="DIP-61498N"/>
<dbReference type="FunCoup" id="Q3U2S4">
    <property type="interactions" value="2973"/>
</dbReference>
<dbReference type="IntAct" id="Q3U2S4">
    <property type="interactions" value="10"/>
</dbReference>
<dbReference type="STRING" id="10090.ENSMUSP00000111330"/>
<dbReference type="MEROPS" id="C85.001"/>
<dbReference type="GlyGen" id="Q3U2S4">
    <property type="glycosylation" value="1 site"/>
</dbReference>
<dbReference type="iPTMnet" id="Q3U2S4"/>
<dbReference type="PhosphoSitePlus" id="Q3U2S4"/>
<dbReference type="jPOST" id="Q3U2S4"/>
<dbReference type="PaxDb" id="10090-ENSMUSP00000033494"/>
<dbReference type="ProteomicsDB" id="294134">
    <molecule id="Q3U2S4-1"/>
</dbReference>
<dbReference type="ProteomicsDB" id="294135">
    <molecule id="Q3U2S4-2"/>
</dbReference>
<dbReference type="Pumba" id="Q3U2S4"/>
<dbReference type="Antibodypedia" id="409">
    <property type="antibodies" value="167 antibodies from 33 providers"/>
</dbReference>
<dbReference type="DNASU" id="54644"/>
<dbReference type="Ensembl" id="ENSMUST00000033494.16">
    <molecule id="Q3U2S4-1"/>
    <property type="protein sequence ID" value="ENSMUSP00000033494.10"/>
    <property type="gene ID" value="ENSMUSG00000031154.16"/>
</dbReference>
<dbReference type="Ensembl" id="ENSMUST00000115668.10">
    <molecule id="Q3U2S4-2"/>
    <property type="protein sequence ID" value="ENSMUSP00000111332.4"/>
    <property type="gene ID" value="ENSMUSG00000031154.16"/>
</dbReference>
<dbReference type="GeneID" id="54644"/>
<dbReference type="KEGG" id="mmu:54644"/>
<dbReference type="UCSC" id="uc009smu.2">
    <molecule id="Q3U2S4-1"/>
    <property type="organism name" value="mouse"/>
</dbReference>
<dbReference type="UCSC" id="uc009smv.2">
    <molecule id="Q3U2S4-2"/>
    <property type="organism name" value="mouse"/>
</dbReference>
<dbReference type="AGR" id="MGI:1859615"/>
<dbReference type="CTD" id="55593"/>
<dbReference type="MGI" id="MGI:1859615">
    <property type="gene designation" value="Otud5"/>
</dbReference>
<dbReference type="VEuPathDB" id="HostDB:ENSMUSG00000031154"/>
<dbReference type="eggNOG" id="KOG2605">
    <property type="taxonomic scope" value="Eukaryota"/>
</dbReference>
<dbReference type="GeneTree" id="ENSGT00940000158963"/>
<dbReference type="InParanoid" id="Q3U2S4"/>
<dbReference type="OMA" id="NKMHRDP"/>
<dbReference type="PhylomeDB" id="Q3U2S4"/>
<dbReference type="TreeFam" id="TF326812"/>
<dbReference type="BioGRID-ORCS" id="54644">
    <property type="hits" value="23 hits in 78 CRISPR screens"/>
</dbReference>
<dbReference type="ChiTaRS" id="Otud5">
    <property type="organism name" value="mouse"/>
</dbReference>
<dbReference type="PRO" id="PR:Q3U2S4"/>
<dbReference type="Proteomes" id="UP000000589">
    <property type="component" value="Chromosome X"/>
</dbReference>
<dbReference type="RNAct" id="Q3U2S4">
    <property type="molecule type" value="protein"/>
</dbReference>
<dbReference type="Bgee" id="ENSMUSG00000031154">
    <property type="expression patterns" value="Expressed in granulocyte and 260 other cell types or tissues"/>
</dbReference>
<dbReference type="ExpressionAtlas" id="Q3U2S4">
    <property type="expression patterns" value="baseline and differential"/>
</dbReference>
<dbReference type="GO" id="GO:0005634">
    <property type="term" value="C:nucleus"/>
    <property type="evidence" value="ECO:0000250"/>
    <property type="project" value="UniProtKB"/>
</dbReference>
<dbReference type="GO" id="GO:0004843">
    <property type="term" value="F:cysteine-type deubiquitinase activity"/>
    <property type="evidence" value="ECO:0000250"/>
    <property type="project" value="UniProtKB"/>
</dbReference>
<dbReference type="GO" id="GO:0101005">
    <property type="term" value="F:deubiquitinase activity"/>
    <property type="evidence" value="ECO:0000266"/>
    <property type="project" value="MGI"/>
</dbReference>
<dbReference type="GO" id="GO:1990380">
    <property type="term" value="F:K48-linked deubiquitinase activity"/>
    <property type="evidence" value="ECO:0000250"/>
    <property type="project" value="UniProtKB"/>
</dbReference>
<dbReference type="GO" id="GO:0061578">
    <property type="term" value="F:K63-linked deubiquitinase activity"/>
    <property type="evidence" value="ECO:0000250"/>
    <property type="project" value="UniProtKB"/>
</dbReference>
<dbReference type="GO" id="GO:0043374">
    <property type="term" value="P:CD8-positive, alpha-beta T cell differentiation"/>
    <property type="evidence" value="ECO:0000315"/>
    <property type="project" value="MGI"/>
</dbReference>
<dbReference type="GO" id="GO:0032700">
    <property type="term" value="P:negative regulation of interleukin-17 production"/>
    <property type="evidence" value="ECO:0000315"/>
    <property type="project" value="MGI"/>
</dbReference>
<dbReference type="GO" id="GO:0014033">
    <property type="term" value="P:neural crest cell differentiation"/>
    <property type="evidence" value="ECO:0000250"/>
    <property type="project" value="UniProtKB"/>
</dbReference>
<dbReference type="GO" id="GO:0043161">
    <property type="term" value="P:proteasome-mediated ubiquitin-dependent protein catabolic process"/>
    <property type="evidence" value="ECO:0000314"/>
    <property type="project" value="MGI"/>
</dbReference>
<dbReference type="GO" id="GO:0016579">
    <property type="term" value="P:protein deubiquitination"/>
    <property type="evidence" value="ECO:0000266"/>
    <property type="project" value="MGI"/>
</dbReference>
<dbReference type="GO" id="GO:0071108">
    <property type="term" value="P:protein K48-linked deubiquitination"/>
    <property type="evidence" value="ECO:0000250"/>
    <property type="project" value="UniProtKB"/>
</dbReference>
<dbReference type="GO" id="GO:0070536">
    <property type="term" value="P:protein K63-linked deubiquitination"/>
    <property type="evidence" value="ECO:0000250"/>
    <property type="project" value="UniProtKB"/>
</dbReference>
<dbReference type="GO" id="GO:0031647">
    <property type="term" value="P:regulation of protein stability"/>
    <property type="evidence" value="ECO:0000315"/>
    <property type="project" value="MGI"/>
</dbReference>
<dbReference type="GO" id="GO:2000316">
    <property type="term" value="P:regulation of T-helper 17 type immune response"/>
    <property type="evidence" value="ECO:0000315"/>
    <property type="project" value="MGI"/>
</dbReference>
<dbReference type="GO" id="GO:0032496">
    <property type="term" value="P:response to lipopolysaccharide"/>
    <property type="evidence" value="ECO:0000250"/>
    <property type="project" value="UniProtKB"/>
</dbReference>
<dbReference type="GO" id="GO:0072540">
    <property type="term" value="P:T-helper 17 cell lineage commitment"/>
    <property type="evidence" value="ECO:0000315"/>
    <property type="project" value="MGI"/>
</dbReference>
<dbReference type="CDD" id="cd22752">
    <property type="entry name" value="OTU_OTUD5-like"/>
    <property type="match status" value="1"/>
</dbReference>
<dbReference type="FunFam" id="3.90.70.80:FF:000002">
    <property type="entry name" value="OTU domain-containing protein 5 isoform X2"/>
    <property type="match status" value="1"/>
</dbReference>
<dbReference type="Gene3D" id="3.90.70.80">
    <property type="match status" value="1"/>
</dbReference>
<dbReference type="InterPro" id="IPR003323">
    <property type="entry name" value="OTU_dom"/>
</dbReference>
<dbReference type="InterPro" id="IPR038765">
    <property type="entry name" value="Papain-like_cys_pep_sf"/>
</dbReference>
<dbReference type="InterPro" id="IPR050704">
    <property type="entry name" value="Peptidase_C85-like"/>
</dbReference>
<dbReference type="PANTHER" id="PTHR12419">
    <property type="entry name" value="OTU DOMAIN CONTAINING PROTEIN"/>
    <property type="match status" value="1"/>
</dbReference>
<dbReference type="PANTHER" id="PTHR12419:SF4">
    <property type="entry name" value="OTU DOMAIN-CONTAINING PROTEIN 5"/>
    <property type="match status" value="1"/>
</dbReference>
<dbReference type="Pfam" id="PF02338">
    <property type="entry name" value="OTU"/>
    <property type="match status" value="1"/>
</dbReference>
<dbReference type="SUPFAM" id="SSF54001">
    <property type="entry name" value="Cysteine proteinases"/>
    <property type="match status" value="1"/>
</dbReference>
<dbReference type="PROSITE" id="PS50802">
    <property type="entry name" value="OTU"/>
    <property type="match status" value="1"/>
</dbReference>